<evidence type="ECO:0000250" key="1"/>
<evidence type="ECO:0000255" key="2"/>
<evidence type="ECO:0000305" key="3"/>
<feature type="chain" id="PRO_0000391547" description="CASP-like protein 2D1">
    <location>
        <begin position="1"/>
        <end position="173"/>
    </location>
</feature>
<feature type="topological domain" description="Cytoplasmic" evidence="2">
    <location>
        <begin position="1"/>
        <end position="9"/>
    </location>
</feature>
<feature type="transmembrane region" description="Helical" evidence="2">
    <location>
        <begin position="10"/>
        <end position="29"/>
    </location>
</feature>
<feature type="topological domain" description="Extracellular" evidence="2">
    <location>
        <begin position="30"/>
        <end position="50"/>
    </location>
</feature>
<feature type="transmembrane region" description="Helical" evidence="2">
    <location>
        <begin position="51"/>
        <end position="71"/>
    </location>
</feature>
<feature type="topological domain" description="Cytoplasmic" evidence="2">
    <location>
        <begin position="72"/>
        <end position="86"/>
    </location>
</feature>
<feature type="transmembrane region" description="Helical" evidence="2">
    <location>
        <begin position="87"/>
        <end position="107"/>
    </location>
</feature>
<feature type="topological domain" description="Extracellular" evidence="2">
    <location>
        <begin position="108"/>
        <end position="131"/>
    </location>
</feature>
<feature type="transmembrane region" description="Helical" evidence="2">
    <location>
        <begin position="132"/>
        <end position="152"/>
    </location>
</feature>
<feature type="topological domain" description="Cytoplasmic" evidence="2">
    <location>
        <begin position="153"/>
        <end position="173"/>
    </location>
</feature>
<feature type="glycosylation site" description="N-linked (GlcNAc...) asparagine" evidence="2">
    <location>
        <position position="34"/>
    </location>
</feature>
<organism>
    <name type="scientific">Ricinus communis</name>
    <name type="common">Castor bean</name>
    <dbReference type="NCBI Taxonomy" id="3988"/>
    <lineage>
        <taxon>Eukaryota</taxon>
        <taxon>Viridiplantae</taxon>
        <taxon>Streptophyta</taxon>
        <taxon>Embryophyta</taxon>
        <taxon>Tracheophyta</taxon>
        <taxon>Spermatophyta</taxon>
        <taxon>Magnoliopsida</taxon>
        <taxon>eudicotyledons</taxon>
        <taxon>Gunneridae</taxon>
        <taxon>Pentapetalae</taxon>
        <taxon>rosids</taxon>
        <taxon>fabids</taxon>
        <taxon>Malpighiales</taxon>
        <taxon>Euphorbiaceae</taxon>
        <taxon>Acalyphoideae</taxon>
        <taxon>Acalypheae</taxon>
        <taxon>Ricinus</taxon>
    </lineage>
</organism>
<gene>
    <name type="ORF">RCOM_1302390</name>
</gene>
<proteinExistence type="evidence at transcript level"/>
<sequence length="173" mass="19043">MAPLLKLLDSSLRVSVIPLSAATIWLTVTNHQDNSSYGNLKYSNIMGLKYMVCISAICASYAFVAAVSIWIKCLVNKVWLFFVSDQIIAYLMVTSVAAAMEILYIAYNGDQKVTWSEACTSYGKFCNGMKTALILHALTLCFFIVLAVISAYRAFSMYQPPVSSKETVEGDAT</sequence>
<keyword id="KW-1003">Cell membrane</keyword>
<keyword id="KW-0325">Glycoprotein</keyword>
<keyword id="KW-0472">Membrane</keyword>
<keyword id="KW-1185">Reference proteome</keyword>
<keyword id="KW-0812">Transmembrane</keyword>
<keyword id="KW-1133">Transmembrane helix</keyword>
<accession>B9SV84</accession>
<protein>
    <recommendedName>
        <fullName>CASP-like protein 2D1</fullName>
        <shortName>RcCASPL2D1</shortName>
    </recommendedName>
</protein>
<reference key="1">
    <citation type="journal article" date="2010" name="Nat. Biotechnol.">
        <title>Draft genome sequence of the oilseed species Ricinus communis.</title>
        <authorList>
            <person name="Chan A.P."/>
            <person name="Crabtree J."/>
            <person name="Zhao Q."/>
            <person name="Lorenzi H."/>
            <person name="Orvis J."/>
            <person name="Puiu D."/>
            <person name="Melake-Berhan A."/>
            <person name="Jones K.M."/>
            <person name="Redman J."/>
            <person name="Chen G."/>
            <person name="Cahoon E.B."/>
            <person name="Gedil M."/>
            <person name="Stanke M."/>
            <person name="Haas B.J."/>
            <person name="Wortman J.R."/>
            <person name="Fraser-Liggett C.M."/>
            <person name="Ravel J."/>
            <person name="Rabinowicz P.D."/>
        </authorList>
    </citation>
    <scope>NUCLEOTIDE SEQUENCE [LARGE SCALE GENOMIC DNA]</scope>
    <source>
        <strain>cv. Hale</strain>
    </source>
</reference>
<reference key="2">
    <citation type="journal article" date="2014" name="Plant Physiol.">
        <title>Functional and evolutionary analysis of the CASPARIAN STRIP MEMBRANE DOMAIN PROTEIN family.</title>
        <authorList>
            <person name="Roppolo D."/>
            <person name="Boeckmann B."/>
            <person name="Pfister A."/>
            <person name="Boutet E."/>
            <person name="Rubio M.C."/>
            <person name="Denervaud-Tendon V."/>
            <person name="Vermeer J.E."/>
            <person name="Gheyselinck J."/>
            <person name="Xenarios I."/>
            <person name="Geldner N."/>
        </authorList>
    </citation>
    <scope>GENE FAMILY</scope>
    <scope>NOMENCLATURE</scope>
</reference>
<name>CSPL7_RICCO</name>
<comment type="subunit">
    <text evidence="1">Homodimer and heterodimers.</text>
</comment>
<comment type="subcellular location">
    <subcellularLocation>
        <location evidence="1">Cell membrane</location>
        <topology evidence="1">Multi-pass membrane protein</topology>
    </subcellularLocation>
</comment>
<comment type="similarity">
    <text evidence="3">Belongs to the Casparian strip membrane proteins (CASP) family.</text>
</comment>
<dbReference type="EMBL" id="EQ974163">
    <property type="protein sequence ID" value="EEF32457.1"/>
    <property type="molecule type" value="Genomic_DNA"/>
</dbReference>
<dbReference type="RefSeq" id="XP_002529903.1">
    <property type="nucleotide sequence ID" value="XM_002529857.2"/>
</dbReference>
<dbReference type="FunCoup" id="B9SV84">
    <property type="interactions" value="598"/>
</dbReference>
<dbReference type="STRING" id="3988.B9SV84"/>
<dbReference type="KEGG" id="rcu:8283926"/>
<dbReference type="eggNOG" id="ENOG502RY7Y">
    <property type="taxonomic scope" value="Eukaryota"/>
</dbReference>
<dbReference type="InParanoid" id="B9SV84"/>
<dbReference type="OrthoDB" id="755577at2759"/>
<dbReference type="Proteomes" id="UP000008311">
    <property type="component" value="Unassembled WGS sequence"/>
</dbReference>
<dbReference type="GO" id="GO:0005886">
    <property type="term" value="C:plasma membrane"/>
    <property type="evidence" value="ECO:0007669"/>
    <property type="project" value="UniProtKB-SubCell"/>
</dbReference>
<dbReference type="InterPro" id="IPR006459">
    <property type="entry name" value="CASP/CASPL"/>
</dbReference>
<dbReference type="InterPro" id="IPR006702">
    <property type="entry name" value="CASP_dom"/>
</dbReference>
<dbReference type="NCBIfam" id="TIGR01569">
    <property type="entry name" value="A_tha_TIGR01569"/>
    <property type="match status" value="1"/>
</dbReference>
<dbReference type="PANTHER" id="PTHR33573:SF30">
    <property type="entry name" value="CASP-LIKE PROTEIN 2C1-RELATED"/>
    <property type="match status" value="1"/>
</dbReference>
<dbReference type="PANTHER" id="PTHR33573">
    <property type="entry name" value="CASP-LIKE PROTEIN 4A4"/>
    <property type="match status" value="1"/>
</dbReference>
<dbReference type="Pfam" id="PF04535">
    <property type="entry name" value="CASP_dom"/>
    <property type="match status" value="1"/>
</dbReference>